<evidence type="ECO:0000255" key="1">
    <source>
        <dbReference type="HAMAP-Rule" id="MF_00123"/>
    </source>
</evidence>
<evidence type="ECO:0000305" key="2"/>
<reference key="1">
    <citation type="journal article" date="2007" name="Genome Res.">
        <title>Genome characteristics of facultatively symbiotic Frankia sp. strains reflect host range and host plant biogeography.</title>
        <authorList>
            <person name="Normand P."/>
            <person name="Lapierre P."/>
            <person name="Tisa L.S."/>
            <person name="Gogarten J.P."/>
            <person name="Alloisio N."/>
            <person name="Bagnarol E."/>
            <person name="Bassi C.A."/>
            <person name="Berry A.M."/>
            <person name="Bickhart D.M."/>
            <person name="Choisne N."/>
            <person name="Couloux A."/>
            <person name="Cournoyer B."/>
            <person name="Cruveiller S."/>
            <person name="Daubin V."/>
            <person name="Demange N."/>
            <person name="Francino M.P."/>
            <person name="Goltsman E."/>
            <person name="Huang Y."/>
            <person name="Kopp O.R."/>
            <person name="Labarre L."/>
            <person name="Lapidus A."/>
            <person name="Lavire C."/>
            <person name="Marechal J."/>
            <person name="Martinez M."/>
            <person name="Mastronunzio J.E."/>
            <person name="Mullin B.C."/>
            <person name="Niemann J."/>
            <person name="Pujic P."/>
            <person name="Rawnsley T."/>
            <person name="Rouy Z."/>
            <person name="Schenowitz C."/>
            <person name="Sellstedt A."/>
            <person name="Tavares F."/>
            <person name="Tomkins J.P."/>
            <person name="Vallenet D."/>
            <person name="Valverde C."/>
            <person name="Wall L.G."/>
            <person name="Wang Y."/>
            <person name="Medigue C."/>
            <person name="Benson D.R."/>
        </authorList>
    </citation>
    <scope>NUCLEOTIDE SEQUENCE [LARGE SCALE GENOMIC DNA]</scope>
    <source>
        <strain>DSM 45818 / CECT 9043 / HFP020203 / CcI3</strain>
    </source>
</reference>
<name>SYR_FRACC</name>
<accession>Q2J9H6</accession>
<comment type="catalytic activity">
    <reaction evidence="1">
        <text>tRNA(Arg) + L-arginine + ATP = L-arginyl-tRNA(Arg) + AMP + diphosphate</text>
        <dbReference type="Rhea" id="RHEA:20301"/>
        <dbReference type="Rhea" id="RHEA-COMP:9658"/>
        <dbReference type="Rhea" id="RHEA-COMP:9673"/>
        <dbReference type="ChEBI" id="CHEBI:30616"/>
        <dbReference type="ChEBI" id="CHEBI:32682"/>
        <dbReference type="ChEBI" id="CHEBI:33019"/>
        <dbReference type="ChEBI" id="CHEBI:78442"/>
        <dbReference type="ChEBI" id="CHEBI:78513"/>
        <dbReference type="ChEBI" id="CHEBI:456215"/>
        <dbReference type="EC" id="6.1.1.19"/>
    </reaction>
</comment>
<comment type="subunit">
    <text evidence="1">Monomer.</text>
</comment>
<comment type="subcellular location">
    <subcellularLocation>
        <location evidence="1">Cytoplasm</location>
    </subcellularLocation>
</comment>
<comment type="similarity">
    <text evidence="1">Belongs to the class-I aminoacyl-tRNA synthetase family.</text>
</comment>
<comment type="sequence caution" evidence="2">
    <conflict type="erroneous initiation">
        <sequence resource="EMBL-CDS" id="ABD12066"/>
    </conflict>
</comment>
<feature type="chain" id="PRO_0000242024" description="Arginine--tRNA ligase">
    <location>
        <begin position="1"/>
        <end position="588"/>
    </location>
</feature>
<feature type="short sequence motif" description="'HIGH' region">
    <location>
        <begin position="129"/>
        <end position="139"/>
    </location>
</feature>
<sequence length="588" mass="63622">MTAQTVRSLINQVEIAVSAAIDRVLPEAAGADPVVRPSEHADFQSNAALALAKRARTKPADLATAVADALRADGSTAVADVTVSGPGFLNLALADATVWTQVAARLADPRLGIDLPEQSRRTVIDYSGPNIAKEMHVGHLRTTIIGDALARVLGFLGAEVIRQNHLGDWGTQFGMLIQYLDEHPDATWHSDDLAPGTSTVSALDSLYRAARKEFDADPGFADRARARVVALQAGDEDTVARWREIVAESEVAFRQIYDRLGVLLEPSDSAGESFYNDRLLDIVDELTAAGIAQDSEGALVVLSQEVTGPDGDPATLMVRKTDGGYGYDTTDLATIRYRIRDLHADRLLYVVDARQALHFRLVFETARRAGWLTDAVDVAHVAFGTVLGPDGRPFKTRAGDTVKLMDLLDAATGKARATVAEKDHALTDDDLDHIAEAAGIGAVKYADLSTSRTKDYVFDVDRMVSFDGNTGVYLQYAHTRIQSILRKAGDMTATVDVALALHPAERALALQLDAFGGALTEVARLLEPHRLCNYLYELARAFTDFYEACPVLQADPSTRANRLALCHLTARTLRQGLDLLGIAAPERM</sequence>
<proteinExistence type="inferred from homology"/>
<protein>
    <recommendedName>
        <fullName evidence="1">Arginine--tRNA ligase</fullName>
        <ecNumber evidence="1">6.1.1.19</ecNumber>
    </recommendedName>
    <alternativeName>
        <fullName evidence="1">Arginyl-tRNA synthetase</fullName>
        <shortName evidence="1">ArgRS</shortName>
    </alternativeName>
</protein>
<keyword id="KW-0030">Aminoacyl-tRNA synthetase</keyword>
<keyword id="KW-0067">ATP-binding</keyword>
<keyword id="KW-0963">Cytoplasm</keyword>
<keyword id="KW-0436">Ligase</keyword>
<keyword id="KW-0547">Nucleotide-binding</keyword>
<keyword id="KW-0648">Protein biosynthesis</keyword>
<keyword id="KW-1185">Reference proteome</keyword>
<organism>
    <name type="scientific">Frankia casuarinae (strain DSM 45818 / CECT 9043 / HFP020203 / CcI3)</name>
    <dbReference type="NCBI Taxonomy" id="106370"/>
    <lineage>
        <taxon>Bacteria</taxon>
        <taxon>Bacillati</taxon>
        <taxon>Actinomycetota</taxon>
        <taxon>Actinomycetes</taxon>
        <taxon>Frankiales</taxon>
        <taxon>Frankiaceae</taxon>
        <taxon>Frankia</taxon>
    </lineage>
</organism>
<dbReference type="EC" id="6.1.1.19" evidence="1"/>
<dbReference type="EMBL" id="CP000249">
    <property type="protein sequence ID" value="ABD12066.1"/>
    <property type="status" value="ALT_INIT"/>
    <property type="molecule type" value="Genomic_DNA"/>
</dbReference>
<dbReference type="SMR" id="Q2J9H6"/>
<dbReference type="STRING" id="106370.Francci3_2705"/>
<dbReference type="KEGG" id="fra:Francci3_2705"/>
<dbReference type="eggNOG" id="COG0018">
    <property type="taxonomic scope" value="Bacteria"/>
</dbReference>
<dbReference type="HOGENOM" id="CLU_006406_5_1_11"/>
<dbReference type="PhylomeDB" id="Q2J9H6"/>
<dbReference type="Proteomes" id="UP000001937">
    <property type="component" value="Chromosome"/>
</dbReference>
<dbReference type="GO" id="GO:0005737">
    <property type="term" value="C:cytoplasm"/>
    <property type="evidence" value="ECO:0007669"/>
    <property type="project" value="UniProtKB-SubCell"/>
</dbReference>
<dbReference type="GO" id="GO:0004814">
    <property type="term" value="F:arginine-tRNA ligase activity"/>
    <property type="evidence" value="ECO:0007669"/>
    <property type="project" value="UniProtKB-UniRule"/>
</dbReference>
<dbReference type="GO" id="GO:0005524">
    <property type="term" value="F:ATP binding"/>
    <property type="evidence" value="ECO:0007669"/>
    <property type="project" value="UniProtKB-UniRule"/>
</dbReference>
<dbReference type="GO" id="GO:0006420">
    <property type="term" value="P:arginyl-tRNA aminoacylation"/>
    <property type="evidence" value="ECO:0007669"/>
    <property type="project" value="UniProtKB-UniRule"/>
</dbReference>
<dbReference type="CDD" id="cd07956">
    <property type="entry name" value="Anticodon_Ia_Arg"/>
    <property type="match status" value="1"/>
</dbReference>
<dbReference type="CDD" id="cd00671">
    <property type="entry name" value="ArgRS_core"/>
    <property type="match status" value="1"/>
</dbReference>
<dbReference type="FunFam" id="1.10.730.10:FF:000008">
    <property type="entry name" value="Arginine--tRNA ligase"/>
    <property type="match status" value="1"/>
</dbReference>
<dbReference type="FunFam" id="3.40.50.620:FF:000030">
    <property type="entry name" value="Arginine--tRNA ligase"/>
    <property type="match status" value="1"/>
</dbReference>
<dbReference type="Gene3D" id="3.30.1360.70">
    <property type="entry name" value="Arginyl tRNA synthetase N-terminal domain"/>
    <property type="match status" value="1"/>
</dbReference>
<dbReference type="Gene3D" id="3.40.50.620">
    <property type="entry name" value="HUPs"/>
    <property type="match status" value="1"/>
</dbReference>
<dbReference type="Gene3D" id="1.10.730.10">
    <property type="entry name" value="Isoleucyl-tRNA Synthetase, Domain 1"/>
    <property type="match status" value="1"/>
</dbReference>
<dbReference type="HAMAP" id="MF_00123">
    <property type="entry name" value="Arg_tRNA_synth"/>
    <property type="match status" value="1"/>
</dbReference>
<dbReference type="InterPro" id="IPR001412">
    <property type="entry name" value="aa-tRNA-synth_I_CS"/>
</dbReference>
<dbReference type="InterPro" id="IPR001278">
    <property type="entry name" value="Arg-tRNA-ligase"/>
</dbReference>
<dbReference type="InterPro" id="IPR005148">
    <property type="entry name" value="Arg-tRNA-synth_N"/>
</dbReference>
<dbReference type="InterPro" id="IPR036695">
    <property type="entry name" value="Arg-tRNA-synth_N_sf"/>
</dbReference>
<dbReference type="InterPro" id="IPR035684">
    <property type="entry name" value="ArgRS_core"/>
</dbReference>
<dbReference type="InterPro" id="IPR008909">
    <property type="entry name" value="DALR_anticod-bd"/>
</dbReference>
<dbReference type="InterPro" id="IPR014729">
    <property type="entry name" value="Rossmann-like_a/b/a_fold"/>
</dbReference>
<dbReference type="InterPro" id="IPR009080">
    <property type="entry name" value="tRNAsynth_Ia_anticodon-bd"/>
</dbReference>
<dbReference type="NCBIfam" id="TIGR00456">
    <property type="entry name" value="argS"/>
    <property type="match status" value="1"/>
</dbReference>
<dbReference type="PANTHER" id="PTHR11956:SF5">
    <property type="entry name" value="ARGININE--TRNA LIGASE, CYTOPLASMIC"/>
    <property type="match status" value="1"/>
</dbReference>
<dbReference type="PANTHER" id="PTHR11956">
    <property type="entry name" value="ARGINYL-TRNA SYNTHETASE"/>
    <property type="match status" value="1"/>
</dbReference>
<dbReference type="Pfam" id="PF03485">
    <property type="entry name" value="Arg_tRNA_synt_N"/>
    <property type="match status" value="1"/>
</dbReference>
<dbReference type="Pfam" id="PF05746">
    <property type="entry name" value="DALR_1"/>
    <property type="match status" value="1"/>
</dbReference>
<dbReference type="Pfam" id="PF00750">
    <property type="entry name" value="tRNA-synt_1d"/>
    <property type="match status" value="1"/>
</dbReference>
<dbReference type="PRINTS" id="PR01038">
    <property type="entry name" value="TRNASYNTHARG"/>
</dbReference>
<dbReference type="SMART" id="SM01016">
    <property type="entry name" value="Arg_tRNA_synt_N"/>
    <property type="match status" value="1"/>
</dbReference>
<dbReference type="SMART" id="SM00836">
    <property type="entry name" value="DALR_1"/>
    <property type="match status" value="1"/>
</dbReference>
<dbReference type="SUPFAM" id="SSF47323">
    <property type="entry name" value="Anticodon-binding domain of a subclass of class I aminoacyl-tRNA synthetases"/>
    <property type="match status" value="1"/>
</dbReference>
<dbReference type="SUPFAM" id="SSF55190">
    <property type="entry name" value="Arginyl-tRNA synthetase (ArgRS), N-terminal 'additional' domain"/>
    <property type="match status" value="1"/>
</dbReference>
<dbReference type="SUPFAM" id="SSF52374">
    <property type="entry name" value="Nucleotidylyl transferase"/>
    <property type="match status" value="1"/>
</dbReference>
<dbReference type="PROSITE" id="PS00178">
    <property type="entry name" value="AA_TRNA_LIGASE_I"/>
    <property type="match status" value="1"/>
</dbReference>
<gene>
    <name evidence="1" type="primary">argS</name>
    <name type="ordered locus">Francci3_2705</name>
</gene>